<name>MTA1_ANAVA</name>
<organism>
    <name type="scientific">Anabaena variabilis</name>
    <dbReference type="NCBI Taxonomy" id="264691"/>
    <lineage>
        <taxon>Bacteria</taxon>
        <taxon>Bacillati</taxon>
        <taxon>Cyanobacteriota</taxon>
        <taxon>Cyanophyceae</taxon>
        <taxon>Nostocales</taxon>
        <taxon>Nostocaceae</taxon>
        <taxon>Trichormus</taxon>
    </lineage>
</organism>
<gene>
    <name evidence="3" type="primary">avaIM</name>
</gene>
<accession>P0A462</accession>
<accession>P70802</accession>
<comment type="function">
    <text evidence="2 5">An alpha subtype methylase that recognizes the double-stranded sequence 5'-CYCGRG-3', methylates C-1 on both strands, and protects the DNA from cleavage by the AvaI endonuclease.</text>
</comment>
<comment type="catalytic activity">
    <reaction evidence="1">
        <text>a 2'-deoxycytidine in DNA + S-adenosyl-L-methionine = an N(4)-methyl-2'-deoxycytidine in DNA + S-adenosyl-L-homocysteine + H(+)</text>
        <dbReference type="Rhea" id="RHEA:16857"/>
        <dbReference type="Rhea" id="RHEA-COMP:11369"/>
        <dbReference type="Rhea" id="RHEA-COMP:13674"/>
        <dbReference type="ChEBI" id="CHEBI:15378"/>
        <dbReference type="ChEBI" id="CHEBI:57856"/>
        <dbReference type="ChEBI" id="CHEBI:59789"/>
        <dbReference type="ChEBI" id="CHEBI:85452"/>
        <dbReference type="ChEBI" id="CHEBI:137933"/>
        <dbReference type="EC" id="2.1.1.113"/>
    </reaction>
</comment>
<comment type="similarity">
    <text evidence="4">Belongs to the N(4)/N(6)-methyltransferase family. N(4) subfamily.</text>
</comment>
<keyword id="KW-0238">DNA-binding</keyword>
<keyword id="KW-0489">Methyltransferase</keyword>
<keyword id="KW-0680">Restriction system</keyword>
<keyword id="KW-0949">S-adenosyl-L-methionine</keyword>
<keyword id="KW-0808">Transferase</keyword>
<proteinExistence type="inferred from homology"/>
<sequence>MTSFELESPIEIKTDPTDLDQESDSFVQEISRFNKALEQRFRDKMRLHESLSRKIVSFQANKSKPQYRWFKYKEAFSVDLVNQLIFEYEKKSFERILDPFAGAGTMLFACSDAGIQADGIEVLPIGQEIIEVRKIIQRQFRREDFLRLIEWYKQKPWNQHNNRKYLNRLRITDGAYPPETEASIERFLFSIEKENILVKQVLRFALLCILESISYTRKDGQYLRWDKRAFRKSGSDKFDKGKILDFDEAITEQIKLILNDSFDLISNTLFCYGTQRSGINLFNASCLKILPEFEQDFYDCIITSPPYCNRYDYTRTYALELALLGVGERDIVQLRQDMLSCTVENKEKSLIHNWQEALRILDKQELLQSILRFLERELERKKLNNNGIPRMIKGYFYEMACVIIECFRVLKNGSPLFMVNDNVRYAGIDISVDLILSNIAEEIGFNVEKILVLPTGKGNSSQQMGTHGRKTLRKCVYVWRKP</sequence>
<dbReference type="EC" id="2.1.1.113" evidence="1"/>
<dbReference type="EMBL" id="X98339">
    <property type="protein sequence ID" value="CAA66984.1"/>
    <property type="molecule type" value="Genomic_DNA"/>
</dbReference>
<dbReference type="PIR" id="S72471">
    <property type="entry name" value="S72471"/>
</dbReference>
<dbReference type="SMR" id="P0A462"/>
<dbReference type="BRENDA" id="2.1.1.113">
    <property type="organism ID" value="322"/>
</dbReference>
<dbReference type="PRO" id="PR:P0A462"/>
<dbReference type="GO" id="GO:0003677">
    <property type="term" value="F:DNA binding"/>
    <property type="evidence" value="ECO:0007669"/>
    <property type="project" value="UniProtKB-KW"/>
</dbReference>
<dbReference type="GO" id="GO:0015667">
    <property type="term" value="F:site-specific DNA-methyltransferase (cytosine-N4-specific) activity"/>
    <property type="evidence" value="ECO:0007669"/>
    <property type="project" value="UniProtKB-EC"/>
</dbReference>
<dbReference type="GO" id="GO:0009307">
    <property type="term" value="P:DNA restriction-modification system"/>
    <property type="evidence" value="ECO:0007669"/>
    <property type="project" value="UniProtKB-KW"/>
</dbReference>
<dbReference type="GO" id="GO:0032259">
    <property type="term" value="P:methylation"/>
    <property type="evidence" value="ECO:0007669"/>
    <property type="project" value="UniProtKB-KW"/>
</dbReference>
<dbReference type="Gene3D" id="3.40.50.150">
    <property type="entry name" value="Vaccinia Virus protein VP39"/>
    <property type="match status" value="2"/>
</dbReference>
<dbReference type="InterPro" id="IPR017985">
    <property type="entry name" value="MeTrfase_CN4_CS"/>
</dbReference>
<dbReference type="InterPro" id="IPR029063">
    <property type="entry name" value="SAM-dependent_MTases_sf"/>
</dbReference>
<dbReference type="SUPFAM" id="SSF53335">
    <property type="entry name" value="S-adenosyl-L-methionine-dependent methyltransferases"/>
    <property type="match status" value="2"/>
</dbReference>
<dbReference type="PROSITE" id="PS00093">
    <property type="entry name" value="N4_MTASE"/>
    <property type="match status" value="1"/>
</dbReference>
<protein>
    <recommendedName>
        <fullName evidence="2">Type II methyltransferase M.AvaI</fullName>
        <shortName evidence="2">M.AvaI</shortName>
        <ecNumber evidence="1">2.1.1.113</ecNumber>
    </recommendedName>
    <alternativeName>
        <fullName>Modification methylase AvaI</fullName>
    </alternativeName>
    <alternativeName>
        <fullName>N(4)- cytosine-specific methyltransferase AvaI</fullName>
    </alternativeName>
</protein>
<feature type="chain" id="PRO_0000087919" description="Type II methyltransferase M.AvaI">
    <location>
        <begin position="1"/>
        <end position="482"/>
    </location>
</feature>
<evidence type="ECO:0000250" key="1">
    <source>
        <dbReference type="UniProtKB" id="Q04845"/>
    </source>
</evidence>
<evidence type="ECO:0000303" key="2">
    <source>
    </source>
</evidence>
<evidence type="ECO:0000303" key="3">
    <source>
    </source>
</evidence>
<evidence type="ECO:0000305" key="4"/>
<evidence type="ECO:0000305" key="5">
    <source>
    </source>
</evidence>
<reference key="1">
    <citation type="journal article" date="1996" name="Mol. Gen. Genet.">
        <title>Cloning and sequence comparison of AvaI and BsoBI restriction-modification systems.</title>
        <authorList>
            <person name="Ruan H."/>
            <person name="Lunnen K.D."/>
            <person name="Scott M.E."/>
            <person name="Moran L.S."/>
            <person name="Slatko B.E."/>
            <person name="Pelletier J.J."/>
            <person name="Hess E.J."/>
            <person name="Benner J. II"/>
            <person name="Wilson G.G."/>
            <person name="Xu S.-Y."/>
        </authorList>
    </citation>
    <scope>NUCLEOTIDE SEQUENCE [GENOMIC DNA]</scope>
    <scope>FUNCTION</scope>
    <source>
        <strain>PCC 7118 / ATCC 27892</strain>
    </source>
</reference>
<reference key="2">
    <citation type="journal article" date="2003" name="Nucleic Acids Res.">
        <title>A nomenclature for restriction enzymes, DNA methyltransferases, homing endonucleases and their genes.</title>
        <authorList>
            <person name="Roberts R.J."/>
            <person name="Belfort M."/>
            <person name="Bestor T."/>
            <person name="Bhagwat A.S."/>
            <person name="Bickle T.A."/>
            <person name="Bitinaite J."/>
            <person name="Blumenthal R.M."/>
            <person name="Degtyarev S.K."/>
            <person name="Dryden D.T."/>
            <person name="Dybvig K."/>
            <person name="Firman K."/>
            <person name="Gromova E.S."/>
            <person name="Gumport R.I."/>
            <person name="Halford S.E."/>
            <person name="Hattman S."/>
            <person name="Heitman J."/>
            <person name="Hornby D.P."/>
            <person name="Janulaitis A."/>
            <person name="Jeltsch A."/>
            <person name="Josephsen J."/>
            <person name="Kiss A."/>
            <person name="Klaenhammer T.R."/>
            <person name="Kobayashi I."/>
            <person name="Kong H."/>
            <person name="Krueger D.H."/>
            <person name="Lacks S."/>
            <person name="Marinus M.G."/>
            <person name="Miyahara M."/>
            <person name="Morgan R.D."/>
            <person name="Murray N.E."/>
            <person name="Nagaraja V."/>
            <person name="Piekarowicz A."/>
            <person name="Pingoud A."/>
            <person name="Raleigh E."/>
            <person name="Rao D.N."/>
            <person name="Reich N."/>
            <person name="Repin V.E."/>
            <person name="Selker E.U."/>
            <person name="Shaw P.C."/>
            <person name="Stein D.C."/>
            <person name="Stoddard B.L."/>
            <person name="Szybalski W."/>
            <person name="Trautner T.A."/>
            <person name="Van Etten J.L."/>
            <person name="Vitor J.M."/>
            <person name="Wilson G.G."/>
            <person name="Xu S.Y."/>
        </authorList>
    </citation>
    <scope>NOMENCLATURE</scope>
    <scope>SUBTYPE</scope>
</reference>